<feature type="chain" id="PRO_0000258769" description="Large ribosomal subunit protein bL35">
    <location>
        <begin position="1"/>
        <end position="64"/>
    </location>
</feature>
<feature type="region of interest" description="Disordered" evidence="2">
    <location>
        <begin position="18"/>
        <end position="39"/>
    </location>
</feature>
<feature type="compositionally biased region" description="Basic residues" evidence="2">
    <location>
        <begin position="26"/>
        <end position="39"/>
    </location>
</feature>
<organism>
    <name type="scientific">Symbiobacterium thermophilum (strain DSM 24528 / JCM 14929 / IAM 14863 / T)</name>
    <dbReference type="NCBI Taxonomy" id="292459"/>
    <lineage>
        <taxon>Bacteria</taxon>
        <taxon>Bacillati</taxon>
        <taxon>Bacillota</taxon>
        <taxon>Clostridia</taxon>
        <taxon>Eubacteriales</taxon>
        <taxon>Symbiobacteriaceae</taxon>
        <taxon>Symbiobacterium</taxon>
    </lineage>
</organism>
<accession>Q67QG6</accession>
<keyword id="KW-1185">Reference proteome</keyword>
<keyword id="KW-0687">Ribonucleoprotein</keyword>
<keyword id="KW-0689">Ribosomal protein</keyword>
<protein>
    <recommendedName>
        <fullName evidence="1">Large ribosomal subunit protein bL35</fullName>
    </recommendedName>
    <alternativeName>
        <fullName evidence="3">50S ribosomal protein L35</fullName>
    </alternativeName>
</protein>
<sequence>MPKMKSHRGAAKRFKLTGSGLVKHYPSNKHHKNTHKKENRIRALKRNLVLSKSFQKNIREILPH</sequence>
<proteinExistence type="inferred from homology"/>
<comment type="similarity">
    <text evidence="1">Belongs to the bacterial ribosomal protein bL35 family.</text>
</comment>
<reference key="1">
    <citation type="journal article" date="2004" name="Nucleic Acids Res.">
        <title>Genome sequence of Symbiobacterium thermophilum, an uncultivable bacterium that depends on microbial commensalism.</title>
        <authorList>
            <person name="Ueda K."/>
            <person name="Yamashita A."/>
            <person name="Ishikawa J."/>
            <person name="Shimada M."/>
            <person name="Watsuji T."/>
            <person name="Morimura K."/>
            <person name="Ikeda H."/>
            <person name="Hattori M."/>
            <person name="Beppu T."/>
        </authorList>
    </citation>
    <scope>NUCLEOTIDE SEQUENCE [LARGE SCALE GENOMIC DNA]</scope>
    <source>
        <strain>DSM 24528 / JCM 14929 / IAM 14863 / T</strain>
    </source>
</reference>
<dbReference type="EMBL" id="AP006840">
    <property type="protein sequence ID" value="BAD40077.1"/>
    <property type="molecule type" value="Genomic_DNA"/>
</dbReference>
<dbReference type="RefSeq" id="WP_011195224.1">
    <property type="nucleotide sequence ID" value="NC_006177.1"/>
</dbReference>
<dbReference type="SMR" id="Q67QG6"/>
<dbReference type="STRING" id="292459.STH1092"/>
<dbReference type="KEGG" id="sth:STH1092"/>
<dbReference type="eggNOG" id="COG0291">
    <property type="taxonomic scope" value="Bacteria"/>
</dbReference>
<dbReference type="HOGENOM" id="CLU_169643_4_3_9"/>
<dbReference type="Proteomes" id="UP000000417">
    <property type="component" value="Chromosome"/>
</dbReference>
<dbReference type="GO" id="GO:0022625">
    <property type="term" value="C:cytosolic large ribosomal subunit"/>
    <property type="evidence" value="ECO:0007669"/>
    <property type="project" value="TreeGrafter"/>
</dbReference>
<dbReference type="GO" id="GO:0003735">
    <property type="term" value="F:structural constituent of ribosome"/>
    <property type="evidence" value="ECO:0007669"/>
    <property type="project" value="InterPro"/>
</dbReference>
<dbReference type="GO" id="GO:0006412">
    <property type="term" value="P:translation"/>
    <property type="evidence" value="ECO:0007669"/>
    <property type="project" value="UniProtKB-UniRule"/>
</dbReference>
<dbReference type="FunFam" id="4.10.410.60:FF:000001">
    <property type="entry name" value="50S ribosomal protein L35"/>
    <property type="match status" value="1"/>
</dbReference>
<dbReference type="Gene3D" id="4.10.410.60">
    <property type="match status" value="1"/>
</dbReference>
<dbReference type="HAMAP" id="MF_00514">
    <property type="entry name" value="Ribosomal_bL35"/>
    <property type="match status" value="1"/>
</dbReference>
<dbReference type="InterPro" id="IPR001706">
    <property type="entry name" value="Ribosomal_bL35"/>
</dbReference>
<dbReference type="InterPro" id="IPR021137">
    <property type="entry name" value="Ribosomal_bL35-like"/>
</dbReference>
<dbReference type="InterPro" id="IPR018265">
    <property type="entry name" value="Ribosomal_bL35_CS"/>
</dbReference>
<dbReference type="InterPro" id="IPR037229">
    <property type="entry name" value="Ribosomal_bL35_sf"/>
</dbReference>
<dbReference type="NCBIfam" id="TIGR00001">
    <property type="entry name" value="rpmI_bact"/>
    <property type="match status" value="1"/>
</dbReference>
<dbReference type="PANTHER" id="PTHR33343">
    <property type="entry name" value="54S RIBOSOMAL PROTEIN BL35M"/>
    <property type="match status" value="1"/>
</dbReference>
<dbReference type="PANTHER" id="PTHR33343:SF1">
    <property type="entry name" value="LARGE RIBOSOMAL SUBUNIT PROTEIN BL35M"/>
    <property type="match status" value="1"/>
</dbReference>
<dbReference type="Pfam" id="PF01632">
    <property type="entry name" value="Ribosomal_L35p"/>
    <property type="match status" value="1"/>
</dbReference>
<dbReference type="PRINTS" id="PR00064">
    <property type="entry name" value="RIBOSOMALL35"/>
</dbReference>
<dbReference type="SUPFAM" id="SSF143034">
    <property type="entry name" value="L35p-like"/>
    <property type="match status" value="1"/>
</dbReference>
<dbReference type="PROSITE" id="PS00936">
    <property type="entry name" value="RIBOSOMAL_L35"/>
    <property type="match status" value="1"/>
</dbReference>
<gene>
    <name evidence="1" type="primary">rpmI</name>
    <name type="ordered locus">STH1092</name>
</gene>
<name>RL35_SYMTH</name>
<evidence type="ECO:0000255" key="1">
    <source>
        <dbReference type="HAMAP-Rule" id="MF_00514"/>
    </source>
</evidence>
<evidence type="ECO:0000256" key="2">
    <source>
        <dbReference type="SAM" id="MobiDB-lite"/>
    </source>
</evidence>
<evidence type="ECO:0000305" key="3"/>